<accession>P59206</accession>
<accession>Q9Z4P7</accession>
<proteinExistence type="evidence at protein level"/>
<gene>
    <name type="primary">lytB</name>
    <name type="ordered locus">spr0867</name>
</gene>
<reference key="1">
    <citation type="journal article" date="1999" name="Mol. Microbiol.">
        <title>LytB, a novel pneumococcal murein hydrolase essential for cell separation.</title>
        <authorList>
            <person name="Garcia P."/>
            <person name="Gonzalez M.P."/>
            <person name="Garcia E."/>
            <person name="Lopez R."/>
            <person name="Garcia J.L."/>
        </authorList>
    </citation>
    <scope>NUCLEOTIDE SEQUENCE [GENOMIC DNA]</scope>
    <scope>PROTEIN SEQUENCE OF 24-30</scope>
</reference>
<reference key="2">
    <citation type="submission" date="2002-02" db="EMBL/GenBank/DDBJ databases">
        <authorList>
            <person name="Garcia J."/>
        </authorList>
    </citation>
    <scope>SEQUENCE REVISION</scope>
</reference>
<reference key="3">
    <citation type="journal article" date="2001" name="J. Bacteriol.">
        <title>Genome of the bacterium Streptococcus pneumoniae strain R6.</title>
        <authorList>
            <person name="Hoskins J."/>
            <person name="Alborn W.E. Jr."/>
            <person name="Arnold J."/>
            <person name="Blaszczak L.C."/>
            <person name="Burgett S."/>
            <person name="DeHoff B.S."/>
            <person name="Estrem S.T."/>
            <person name="Fritz L."/>
            <person name="Fu D.-J."/>
            <person name="Fuller W."/>
            <person name="Geringer C."/>
            <person name="Gilmour R."/>
            <person name="Glass J.S."/>
            <person name="Khoja H."/>
            <person name="Kraft A.R."/>
            <person name="Lagace R.E."/>
            <person name="LeBlanc D.J."/>
            <person name="Lee L.N."/>
            <person name="Lefkowitz E.J."/>
            <person name="Lu J."/>
            <person name="Matsushima P."/>
            <person name="McAhren S.M."/>
            <person name="McHenney M."/>
            <person name="McLeaster K."/>
            <person name="Mundy C.W."/>
            <person name="Nicas T.I."/>
            <person name="Norris F.H."/>
            <person name="O'Gara M."/>
            <person name="Peery R.B."/>
            <person name="Robertson G.T."/>
            <person name="Rockey P."/>
            <person name="Sun P.-M."/>
            <person name="Winkler M.E."/>
            <person name="Yang Y."/>
            <person name="Young-Bellido M."/>
            <person name="Zhao G."/>
            <person name="Zook C.A."/>
            <person name="Baltz R.H."/>
            <person name="Jaskunas S.R."/>
            <person name="Rosteck P.R. Jr."/>
            <person name="Skatrud P.L."/>
            <person name="Glass J.I."/>
        </authorList>
    </citation>
    <scope>NUCLEOTIDE SEQUENCE [LARGE SCALE GENOMIC DNA]</scope>
    <source>
        <strain>ATCC BAA-255 / R6</strain>
    </source>
</reference>
<organism>
    <name type="scientific">Streptococcus pneumoniae (strain ATCC BAA-255 / R6)</name>
    <dbReference type="NCBI Taxonomy" id="171101"/>
    <lineage>
        <taxon>Bacteria</taxon>
        <taxon>Bacillati</taxon>
        <taxon>Bacillota</taxon>
        <taxon>Bacilli</taxon>
        <taxon>Lactobacillales</taxon>
        <taxon>Streptococcaceae</taxon>
        <taxon>Streptococcus</taxon>
    </lineage>
</organism>
<protein>
    <recommendedName>
        <fullName>Putative endo-beta-N-acetylglucosaminidase</fullName>
        <ecNumber>3.2.1.96</ecNumber>
    </recommendedName>
    <alternativeName>
        <fullName>Murein hydrolase</fullName>
    </alternativeName>
</protein>
<keyword id="KW-0002">3D-structure</keyword>
<keyword id="KW-0961">Cell wall biogenesis/degradation</keyword>
<keyword id="KW-0903">Direct protein sequencing</keyword>
<keyword id="KW-0378">Hydrolase</keyword>
<keyword id="KW-1185">Reference proteome</keyword>
<keyword id="KW-0677">Repeat</keyword>
<keyword id="KW-0964">Secreted</keyword>
<keyword id="KW-0732">Signal</keyword>
<comment type="function">
    <text>Plays an important role in cell wall degradation and cell separation.</text>
</comment>
<comment type="catalytic activity">
    <reaction>
        <text>an N(4)-(oligosaccharide-(1-&gt;3)-[oligosaccharide-(1-&gt;6)]-beta-D-Man-(1-&gt;4)-beta-D-GlcNAc-(1-&gt;4)-alpha-D-GlcNAc)-L-asparaginyl-[protein] + H2O = an oligosaccharide-(1-&gt;3)-[oligosaccharide-(1-&gt;6)]-beta-D-Man-(1-&gt;4)-D-GlcNAc + N(4)-(N-acetyl-beta-D-glucosaminyl)-L-asparaginyl-[protein]</text>
        <dbReference type="Rhea" id="RHEA:73067"/>
        <dbReference type="Rhea" id="RHEA-COMP:12603"/>
        <dbReference type="Rhea" id="RHEA-COMP:18176"/>
        <dbReference type="ChEBI" id="CHEBI:15377"/>
        <dbReference type="ChEBI" id="CHEBI:132248"/>
        <dbReference type="ChEBI" id="CHEBI:192714"/>
        <dbReference type="ChEBI" id="CHEBI:192715"/>
        <dbReference type="EC" id="3.2.1.96"/>
    </reaction>
</comment>
<comment type="subcellular location">
    <subcellularLocation>
        <location evidence="1">Secreted</location>
    </subcellularLocation>
</comment>
<comment type="similarity">
    <text evidence="3">Belongs to the glycosyl hydrolase 73 family.</text>
</comment>
<comment type="sequence caution" evidence="3">
    <conflict type="erroneous initiation">
        <sequence resource="EMBL-CDS" id="AAK99671"/>
    </conflict>
</comment>
<name>LYTB_STRR6</name>
<sequence length="702" mass="81900">MKKVRFIFLALLFFLASPEGAMASDGTWQGKQYLKEDGSQAANEWVFDTHYQSWFYIKADANYAENEWLKQGDDYFYLKSGGYMAKSEWVEDKGAFYYLDQDGKMKRNAWVGTSYVGATGAKVIEDWVYDSQYDAWFYIKADGQHAEKEWLQIKGKDYYFKSGGYLLTSQWINQAYVNASGAKVQQGWLFDKQYQSWFYIKENGNYADKEWIFENGHYYYLKSGGYMAANEWIWDKESWFYLKFDGKIAEKEWVYDSHSQAWYYFKSGGYMAANEWIWDKESWFYLKFDGKMAEKEWVYDSHSQAWYYFKSGGYMTANEWIWDKESWFYLKSDGKIAEKEWVYDSHSQAWYYFKSGGYMTANEWIWDKESWFYLKSDGKMAEKEWVYDSHSQAWYYFKSGGYMAKNETVDGYQLGSDGKWLGGKATNKNAAYYQVVPVTANVYDSDGEKLSYISQGSVVWLDKDRKSDDKRLAITISGLSGYMKTEDLQALDASKDFIPYYESDGHRFYHYVAQNASIPVASHLSDMEVGKKYYSADGLHFDGFKLENPFLFKDLTEATNYSAEELDKVFSLLNINNSLLENKGATFKEAEEHYHINALYLLAHSALESNWGRSKIAKDKNNFFGITAYDTTPYLSAKTFDDVDKGILGATKWIKENYIDRGRTFLGNKASGMNVEYASDPYWGEKIASVMMKINEKLGGKD</sequence>
<dbReference type="EC" id="3.2.1.96"/>
<dbReference type="EMBL" id="AJ010312">
    <property type="protein sequence ID" value="CAA09078.2"/>
    <property type="molecule type" value="Genomic_DNA"/>
</dbReference>
<dbReference type="EMBL" id="AE007317">
    <property type="protein sequence ID" value="AAK99671.1"/>
    <property type="status" value="ALT_INIT"/>
    <property type="molecule type" value="Genomic_DNA"/>
</dbReference>
<dbReference type="PIR" id="C97980">
    <property type="entry name" value="C97980"/>
</dbReference>
<dbReference type="RefSeq" id="NP_358461.1">
    <property type="nucleotide sequence ID" value="NC_003098.1"/>
</dbReference>
<dbReference type="RefSeq" id="WP_010976495.1">
    <property type="nucleotide sequence ID" value="NC_003098.1"/>
</dbReference>
<dbReference type="PDB" id="7PJ3">
    <property type="method" value="X-ray"/>
    <property type="resolution" value="1.43 A"/>
    <property type="chains" value="AAA=429-702"/>
</dbReference>
<dbReference type="PDB" id="7PJ4">
    <property type="method" value="X-ray"/>
    <property type="resolution" value="1.25 A"/>
    <property type="chains" value="AAA=429-702"/>
</dbReference>
<dbReference type="PDB" id="7PJ5">
    <property type="method" value="X-ray"/>
    <property type="resolution" value="1.55 A"/>
    <property type="chains" value="AAA=429-702"/>
</dbReference>
<dbReference type="PDB" id="7PJ6">
    <property type="method" value="X-ray"/>
    <property type="resolution" value="1.30 A"/>
    <property type="chains" value="AAA=429-702"/>
</dbReference>
<dbReference type="PDB" id="7PL2">
    <property type="method" value="X-ray"/>
    <property type="resolution" value="2.98 A"/>
    <property type="chains" value="A=24-428"/>
</dbReference>
<dbReference type="PDB" id="7PL3">
    <property type="method" value="X-ray"/>
    <property type="resolution" value="1.78 A"/>
    <property type="chains" value="AA=429-702"/>
</dbReference>
<dbReference type="PDB" id="7PL5">
    <property type="method" value="X-ray"/>
    <property type="resolution" value="1.99 A"/>
    <property type="chains" value="AAA/BBB=24-208"/>
</dbReference>
<dbReference type="PDB" id="7POD">
    <property type="method" value="X-ray"/>
    <property type="resolution" value="1.50 A"/>
    <property type="chains" value="A=429-702"/>
</dbReference>
<dbReference type="PDBsum" id="7PJ3"/>
<dbReference type="PDBsum" id="7PJ4"/>
<dbReference type="PDBsum" id="7PJ5"/>
<dbReference type="PDBsum" id="7PJ6"/>
<dbReference type="PDBsum" id="7PL2"/>
<dbReference type="PDBsum" id="7PL3"/>
<dbReference type="PDBsum" id="7PL5"/>
<dbReference type="PDBsum" id="7POD"/>
<dbReference type="SMR" id="P59206"/>
<dbReference type="STRING" id="171101.spr0867"/>
<dbReference type="CAZy" id="GH73">
    <property type="family name" value="Glycoside Hydrolase Family 73"/>
</dbReference>
<dbReference type="KEGG" id="spr:spr0867"/>
<dbReference type="PATRIC" id="fig|171101.6.peg.955"/>
<dbReference type="eggNOG" id="COG4193">
    <property type="taxonomic scope" value="Bacteria"/>
</dbReference>
<dbReference type="eggNOG" id="COG5263">
    <property type="taxonomic scope" value="Bacteria"/>
</dbReference>
<dbReference type="HOGENOM" id="CLU_427450_0_0_9"/>
<dbReference type="PHI-base" id="PHI:3153"/>
<dbReference type="Proteomes" id="UP000000586">
    <property type="component" value="Chromosome"/>
</dbReference>
<dbReference type="GO" id="GO:0005576">
    <property type="term" value="C:extracellular region"/>
    <property type="evidence" value="ECO:0007669"/>
    <property type="project" value="UniProtKB-SubCell"/>
</dbReference>
<dbReference type="GO" id="GO:0004040">
    <property type="term" value="F:amidase activity"/>
    <property type="evidence" value="ECO:0007669"/>
    <property type="project" value="InterPro"/>
</dbReference>
<dbReference type="GO" id="GO:0033925">
    <property type="term" value="F:mannosyl-glycoprotein endo-beta-N-acetylglucosaminidase activity"/>
    <property type="evidence" value="ECO:0007669"/>
    <property type="project" value="UniProtKB-EC"/>
</dbReference>
<dbReference type="GO" id="GO:0071555">
    <property type="term" value="P:cell wall organization"/>
    <property type="evidence" value="ECO:0007669"/>
    <property type="project" value="UniProtKB-KW"/>
</dbReference>
<dbReference type="Gene3D" id="1.10.530.10">
    <property type="match status" value="1"/>
</dbReference>
<dbReference type="Gene3D" id="2.10.270.10">
    <property type="entry name" value="Cholin Binding"/>
    <property type="match status" value="2"/>
</dbReference>
<dbReference type="Gene3D" id="2.20.120.10">
    <property type="entry name" value="Multimodular pneumococcal cell wall endolysin, domain 3"/>
    <property type="match status" value="5"/>
</dbReference>
<dbReference type="InterPro" id="IPR018337">
    <property type="entry name" value="Cell_wall/Cho-bd_repeat"/>
</dbReference>
<dbReference type="InterPro" id="IPR051056">
    <property type="entry name" value="Glycosyl_Hydrolase_73"/>
</dbReference>
<dbReference type="InterPro" id="IPR041074">
    <property type="entry name" value="LytB_SH3"/>
</dbReference>
<dbReference type="InterPro" id="IPR040742">
    <property type="entry name" value="LytB_WW-like"/>
</dbReference>
<dbReference type="InterPro" id="IPR002901">
    <property type="entry name" value="MGlyc_endo_b_GlcNAc-like_dom"/>
</dbReference>
<dbReference type="PANTHER" id="PTHR33308">
    <property type="entry name" value="PEPTIDOGLYCAN HYDROLASE FLGJ"/>
    <property type="match status" value="1"/>
</dbReference>
<dbReference type="PANTHER" id="PTHR33308:SF9">
    <property type="entry name" value="PEPTIDOGLYCAN HYDROLASE FLGJ"/>
    <property type="match status" value="1"/>
</dbReference>
<dbReference type="Pfam" id="PF01473">
    <property type="entry name" value="Choline_bind_1"/>
    <property type="match status" value="9"/>
</dbReference>
<dbReference type="Pfam" id="PF19085">
    <property type="entry name" value="Choline_bind_2"/>
    <property type="match status" value="2"/>
</dbReference>
<dbReference type="Pfam" id="PF01832">
    <property type="entry name" value="Glucosaminidase"/>
    <property type="match status" value="1"/>
</dbReference>
<dbReference type="Pfam" id="PF18342">
    <property type="entry name" value="LytB_SH3"/>
    <property type="match status" value="1"/>
</dbReference>
<dbReference type="Pfam" id="PF17890">
    <property type="entry name" value="WW_like"/>
    <property type="match status" value="1"/>
</dbReference>
<dbReference type="SMART" id="SM00047">
    <property type="entry name" value="LYZ2"/>
    <property type="match status" value="1"/>
</dbReference>
<dbReference type="SUPFAM" id="SSF69360">
    <property type="entry name" value="Cell wall binding repeat"/>
    <property type="match status" value="2"/>
</dbReference>
<dbReference type="PROSITE" id="PS51170">
    <property type="entry name" value="CW"/>
    <property type="match status" value="15"/>
</dbReference>
<feature type="signal peptide" evidence="2">
    <location>
        <begin position="1"/>
        <end position="23"/>
    </location>
</feature>
<feature type="chain" id="PRO_0000012117" description="Putative endo-beta-N-acetylglucosaminidase">
    <location>
        <begin position="24"/>
        <end position="702"/>
    </location>
</feature>
<feature type="repeat" description="Cell wall-binding 1">
    <location>
        <begin position="42"/>
        <end position="63"/>
    </location>
</feature>
<feature type="repeat" description="Cell wall-binding 2">
    <location>
        <begin position="65"/>
        <end position="84"/>
    </location>
</feature>
<feature type="repeat" description="Cell wall-binding 3">
    <location>
        <begin position="86"/>
        <end position="105"/>
    </location>
</feature>
<feature type="repeat" description="Cell wall-binding 4">
    <location>
        <begin position="124"/>
        <end position="145"/>
    </location>
</feature>
<feature type="repeat" description="Cell wall-binding 5">
    <location>
        <begin position="147"/>
        <end position="166"/>
    </location>
</feature>
<feature type="repeat" description="Cell wall-binding 6">
    <location>
        <begin position="185"/>
        <end position="206"/>
    </location>
</feature>
<feature type="repeat" description="Cell wall-binding 7">
    <location>
        <begin position="208"/>
        <end position="227"/>
    </location>
</feature>
<feature type="repeat" description="Cell wall-binding 8">
    <location>
        <begin position="229"/>
        <end position="248"/>
    </location>
</feature>
<feature type="repeat" description="Cell wall-binding 9">
    <location>
        <begin position="250"/>
        <end position="271"/>
    </location>
</feature>
<feature type="repeat" description="Cell wall-binding 10">
    <location>
        <begin position="273"/>
        <end position="292"/>
    </location>
</feature>
<feature type="repeat" description="Cell wall-binding 11">
    <location>
        <begin position="294"/>
        <end position="315"/>
    </location>
</feature>
<feature type="repeat" description="Cell wall-binding 12">
    <location>
        <begin position="317"/>
        <end position="336"/>
    </location>
</feature>
<feature type="repeat" description="Cell wall-binding 13">
    <location>
        <begin position="338"/>
        <end position="359"/>
    </location>
</feature>
<feature type="repeat" description="Cell wall-binding 14">
    <location>
        <begin position="361"/>
        <end position="380"/>
    </location>
</feature>
<feature type="repeat" description="Cell wall-binding 15">
    <location>
        <begin position="382"/>
        <end position="403"/>
    </location>
</feature>
<feature type="strand" evidence="4">
    <location>
        <begin position="27"/>
        <end position="29"/>
    </location>
</feature>
<feature type="strand" evidence="4">
    <location>
        <begin position="32"/>
        <end position="34"/>
    </location>
</feature>
<feature type="strand" evidence="4">
    <location>
        <begin position="38"/>
        <end position="40"/>
    </location>
</feature>
<feature type="strand" evidence="4">
    <location>
        <begin position="43"/>
        <end position="48"/>
    </location>
</feature>
<feature type="turn" evidence="4">
    <location>
        <begin position="49"/>
        <end position="52"/>
    </location>
</feature>
<feature type="strand" evidence="4">
    <location>
        <begin position="53"/>
        <end position="57"/>
    </location>
</feature>
<feature type="strand" evidence="4">
    <location>
        <begin position="66"/>
        <end position="71"/>
    </location>
</feature>
<feature type="strand" evidence="4">
    <location>
        <begin position="74"/>
        <end position="78"/>
    </location>
</feature>
<feature type="strand" evidence="4">
    <location>
        <begin position="87"/>
        <end position="92"/>
    </location>
</feature>
<feature type="strand" evidence="4">
    <location>
        <begin position="95"/>
        <end position="99"/>
    </location>
</feature>
<feature type="strand" evidence="4">
    <location>
        <begin position="108"/>
        <end position="111"/>
    </location>
</feature>
<feature type="strand" evidence="4">
    <location>
        <begin position="114"/>
        <end position="116"/>
    </location>
</feature>
<feature type="strand" evidence="4">
    <location>
        <begin position="125"/>
        <end position="130"/>
    </location>
</feature>
<feature type="turn" evidence="4">
    <location>
        <begin position="131"/>
        <end position="134"/>
    </location>
</feature>
<feature type="strand" evidence="4">
    <location>
        <begin position="135"/>
        <end position="139"/>
    </location>
</feature>
<feature type="strand" evidence="4">
    <location>
        <begin position="143"/>
        <end position="145"/>
    </location>
</feature>
<feature type="strand" evidence="4">
    <location>
        <begin position="148"/>
        <end position="153"/>
    </location>
</feature>
<feature type="strand" evidence="4">
    <location>
        <begin position="156"/>
        <end position="160"/>
    </location>
</feature>
<feature type="strand" evidence="4">
    <location>
        <begin position="169"/>
        <end position="172"/>
    </location>
</feature>
<feature type="strand" evidence="4">
    <location>
        <begin position="175"/>
        <end position="177"/>
    </location>
</feature>
<feature type="strand" evidence="4">
    <location>
        <begin position="181"/>
        <end position="183"/>
    </location>
</feature>
<feature type="strand" evidence="4">
    <location>
        <begin position="186"/>
        <end position="191"/>
    </location>
</feature>
<feature type="turn" evidence="4">
    <location>
        <begin position="192"/>
        <end position="195"/>
    </location>
</feature>
<feature type="strand" evidence="4">
    <location>
        <begin position="196"/>
        <end position="200"/>
    </location>
</feature>
<feature type="strand" evidence="4">
    <location>
        <begin position="204"/>
        <end position="206"/>
    </location>
</feature>
<feature type="strand" evidence="4">
    <location>
        <begin position="209"/>
        <end position="214"/>
    </location>
</feature>
<feature type="strand" evidence="4">
    <location>
        <begin position="217"/>
        <end position="221"/>
    </location>
</feature>
<feature type="strand" evidence="4">
    <location>
        <begin position="230"/>
        <end position="234"/>
    </location>
</feature>
<feature type="strand" evidence="4">
    <location>
        <begin position="236"/>
        <end position="242"/>
    </location>
</feature>
<feature type="strand" evidence="4">
    <location>
        <begin position="251"/>
        <end position="256"/>
    </location>
</feature>
<feature type="turn" evidence="4">
    <location>
        <begin position="257"/>
        <end position="260"/>
    </location>
</feature>
<feature type="strand" evidence="4">
    <location>
        <begin position="261"/>
        <end position="265"/>
    </location>
</feature>
<feature type="strand" evidence="4">
    <location>
        <begin position="274"/>
        <end position="279"/>
    </location>
</feature>
<feature type="strand" evidence="4">
    <location>
        <begin position="282"/>
        <end position="286"/>
    </location>
</feature>
<feature type="strand" evidence="4">
    <location>
        <begin position="295"/>
        <end position="300"/>
    </location>
</feature>
<feature type="turn" evidence="4">
    <location>
        <begin position="301"/>
        <end position="304"/>
    </location>
</feature>
<feature type="strand" evidence="4">
    <location>
        <begin position="305"/>
        <end position="309"/>
    </location>
</feature>
<feature type="strand" evidence="4">
    <location>
        <begin position="318"/>
        <end position="322"/>
    </location>
</feature>
<feature type="strand" evidence="4">
    <location>
        <begin position="327"/>
        <end position="330"/>
    </location>
</feature>
<feature type="strand" evidence="4">
    <location>
        <begin position="339"/>
        <end position="344"/>
    </location>
</feature>
<feature type="turn" evidence="4">
    <location>
        <begin position="345"/>
        <end position="348"/>
    </location>
</feature>
<feature type="strand" evidence="4">
    <location>
        <begin position="349"/>
        <end position="353"/>
    </location>
</feature>
<feature type="strand" evidence="4">
    <location>
        <begin position="362"/>
        <end position="366"/>
    </location>
</feature>
<feature type="strand" evidence="4">
    <location>
        <begin position="368"/>
        <end position="374"/>
    </location>
</feature>
<feature type="strand" evidence="4">
    <location>
        <begin position="383"/>
        <end position="388"/>
    </location>
</feature>
<feature type="turn" evidence="4">
    <location>
        <begin position="389"/>
        <end position="392"/>
    </location>
</feature>
<feature type="strand" evidence="4">
    <location>
        <begin position="393"/>
        <end position="398"/>
    </location>
</feature>
<feature type="turn" evidence="4">
    <location>
        <begin position="399"/>
        <end position="401"/>
    </location>
</feature>
<feature type="strand" evidence="4">
    <location>
        <begin position="406"/>
        <end position="409"/>
    </location>
</feature>
<feature type="strand" evidence="4">
    <location>
        <begin position="412"/>
        <end position="414"/>
    </location>
</feature>
<feature type="strand" evidence="5">
    <location>
        <begin position="432"/>
        <end position="435"/>
    </location>
</feature>
<feature type="strand" evidence="5">
    <location>
        <begin position="437"/>
        <end position="443"/>
    </location>
</feature>
<feature type="strand" evidence="5">
    <location>
        <begin position="449"/>
        <end position="454"/>
    </location>
</feature>
<feature type="strand" evidence="5">
    <location>
        <begin position="458"/>
        <end position="461"/>
    </location>
</feature>
<feature type="strand" evidence="5">
    <location>
        <begin position="469"/>
        <end position="476"/>
    </location>
</feature>
<feature type="strand" evidence="5">
    <location>
        <begin position="479"/>
        <end position="484"/>
    </location>
</feature>
<feature type="helix" evidence="5">
    <location>
        <begin position="485"/>
        <end position="487"/>
    </location>
</feature>
<feature type="strand" evidence="5">
    <location>
        <begin position="488"/>
        <end position="490"/>
    </location>
</feature>
<feature type="turn" evidence="5">
    <location>
        <begin position="493"/>
        <end position="495"/>
    </location>
</feature>
<feature type="strand" evidence="5">
    <location>
        <begin position="500"/>
        <end position="503"/>
    </location>
</feature>
<feature type="strand" evidence="5">
    <location>
        <begin position="505"/>
        <end position="513"/>
    </location>
</feature>
<feature type="strand" evidence="5">
    <location>
        <begin position="516"/>
        <end position="522"/>
    </location>
</feature>
<feature type="strand" evidence="5">
    <location>
        <begin position="536"/>
        <end position="540"/>
    </location>
</feature>
<feature type="helix" evidence="5">
    <location>
        <begin position="549"/>
        <end position="552"/>
    </location>
</feature>
<feature type="helix" evidence="5">
    <location>
        <begin position="563"/>
        <end position="572"/>
    </location>
</feature>
<feature type="turn" evidence="5">
    <location>
        <begin position="579"/>
        <end position="582"/>
    </location>
</feature>
<feature type="helix" evidence="5">
    <location>
        <begin position="584"/>
        <end position="594"/>
    </location>
</feature>
<feature type="helix" evidence="5">
    <location>
        <begin position="598"/>
        <end position="609"/>
    </location>
</feature>
<feature type="turn" evidence="5">
    <location>
        <begin position="610"/>
        <end position="613"/>
    </location>
</feature>
<feature type="helix" evidence="5">
    <location>
        <begin position="615"/>
        <end position="620"/>
    </location>
</feature>
<feature type="helix" evidence="5">
    <location>
        <begin position="633"/>
        <end position="636"/>
    </location>
</feature>
<feature type="helix" evidence="5">
    <location>
        <begin position="643"/>
        <end position="657"/>
    </location>
</feature>
<feature type="helix" evidence="5">
    <location>
        <begin position="659"/>
        <end position="661"/>
    </location>
</feature>
<feature type="strand" evidence="5">
    <location>
        <begin position="669"/>
        <end position="672"/>
    </location>
</feature>
<feature type="helix" evidence="5">
    <location>
        <begin position="674"/>
        <end position="677"/>
    </location>
</feature>
<feature type="helix" evidence="5">
    <location>
        <begin position="683"/>
        <end position="697"/>
    </location>
</feature>
<evidence type="ECO:0000250" key="1"/>
<evidence type="ECO:0000269" key="2">
    <source>
    </source>
</evidence>
<evidence type="ECO:0000305" key="3"/>
<evidence type="ECO:0007829" key="4">
    <source>
        <dbReference type="PDB" id="7PL2"/>
    </source>
</evidence>
<evidence type="ECO:0007829" key="5">
    <source>
        <dbReference type="PDB" id="7POD"/>
    </source>
</evidence>